<reference key="1">
    <citation type="journal article" date="2010" name="Genome Biol.">
        <title>Structure and dynamics of the pan-genome of Streptococcus pneumoniae and closely related species.</title>
        <authorList>
            <person name="Donati C."/>
            <person name="Hiller N.L."/>
            <person name="Tettelin H."/>
            <person name="Muzzi A."/>
            <person name="Croucher N.J."/>
            <person name="Angiuoli S.V."/>
            <person name="Oggioni M."/>
            <person name="Dunning Hotopp J.C."/>
            <person name="Hu F.Z."/>
            <person name="Riley D.R."/>
            <person name="Covacci A."/>
            <person name="Mitchell T.J."/>
            <person name="Bentley S.D."/>
            <person name="Kilian M."/>
            <person name="Ehrlich G.D."/>
            <person name="Rappuoli R."/>
            <person name="Moxon E.R."/>
            <person name="Masignani V."/>
        </authorList>
    </citation>
    <scope>NUCLEOTIDE SEQUENCE [LARGE SCALE GENOMIC DNA]</scope>
    <source>
        <strain>Taiwan19F-14</strain>
    </source>
</reference>
<evidence type="ECO:0000255" key="1">
    <source>
        <dbReference type="HAMAP-Rule" id="MF_01368"/>
    </source>
</evidence>
<evidence type="ECO:0000305" key="2"/>
<comment type="subunit">
    <text evidence="1">Part of the 50S ribosomal subunit. Contacts protein L32.</text>
</comment>
<comment type="similarity">
    <text evidence="1">Belongs to the bacterial ribosomal protein bL17 family.</text>
</comment>
<name>RL17_STRZT</name>
<sequence>MAYRKLGRTSSQRKAMLRDLTTDLLINESIVTTEARAKEIRKTVEKMITLGKRGDLHARRQAAAFVRNEIASENYDEATDKYTSTTALQKLFSEIAPRYAERNGGYTRILKTEPRRGDAAPMAIIELV</sequence>
<gene>
    <name evidence="1" type="primary">rplQ</name>
    <name type="ordered locus">SPT_0283</name>
</gene>
<keyword id="KW-0687">Ribonucleoprotein</keyword>
<keyword id="KW-0689">Ribosomal protein</keyword>
<dbReference type="EMBL" id="CP000921">
    <property type="protein sequence ID" value="ACO23182.1"/>
    <property type="molecule type" value="Genomic_DNA"/>
</dbReference>
<dbReference type="RefSeq" id="WP_000331493.1">
    <property type="nucleotide sequence ID" value="NC_012469.1"/>
</dbReference>
<dbReference type="SMR" id="C1CPB5"/>
<dbReference type="GeneID" id="93738984"/>
<dbReference type="KEGG" id="snt:SPT_0283"/>
<dbReference type="HOGENOM" id="CLU_074407_2_2_9"/>
<dbReference type="GO" id="GO:0022625">
    <property type="term" value="C:cytosolic large ribosomal subunit"/>
    <property type="evidence" value="ECO:0007669"/>
    <property type="project" value="TreeGrafter"/>
</dbReference>
<dbReference type="GO" id="GO:0003735">
    <property type="term" value="F:structural constituent of ribosome"/>
    <property type="evidence" value="ECO:0007669"/>
    <property type="project" value="InterPro"/>
</dbReference>
<dbReference type="GO" id="GO:0006412">
    <property type="term" value="P:translation"/>
    <property type="evidence" value="ECO:0007669"/>
    <property type="project" value="UniProtKB-UniRule"/>
</dbReference>
<dbReference type="FunFam" id="3.90.1030.10:FF:000002">
    <property type="entry name" value="50S ribosomal protein L17"/>
    <property type="match status" value="1"/>
</dbReference>
<dbReference type="Gene3D" id="3.90.1030.10">
    <property type="entry name" value="Ribosomal protein L17"/>
    <property type="match status" value="1"/>
</dbReference>
<dbReference type="HAMAP" id="MF_01368">
    <property type="entry name" value="Ribosomal_bL17"/>
    <property type="match status" value="1"/>
</dbReference>
<dbReference type="InterPro" id="IPR000456">
    <property type="entry name" value="Ribosomal_bL17"/>
</dbReference>
<dbReference type="InterPro" id="IPR047859">
    <property type="entry name" value="Ribosomal_bL17_CS"/>
</dbReference>
<dbReference type="InterPro" id="IPR036373">
    <property type="entry name" value="Ribosomal_bL17_sf"/>
</dbReference>
<dbReference type="NCBIfam" id="TIGR00059">
    <property type="entry name" value="L17"/>
    <property type="match status" value="1"/>
</dbReference>
<dbReference type="PANTHER" id="PTHR14413:SF16">
    <property type="entry name" value="LARGE RIBOSOMAL SUBUNIT PROTEIN BL17M"/>
    <property type="match status" value="1"/>
</dbReference>
<dbReference type="PANTHER" id="PTHR14413">
    <property type="entry name" value="RIBOSOMAL PROTEIN L17"/>
    <property type="match status" value="1"/>
</dbReference>
<dbReference type="Pfam" id="PF01196">
    <property type="entry name" value="Ribosomal_L17"/>
    <property type="match status" value="1"/>
</dbReference>
<dbReference type="SUPFAM" id="SSF64263">
    <property type="entry name" value="Prokaryotic ribosomal protein L17"/>
    <property type="match status" value="1"/>
</dbReference>
<dbReference type="PROSITE" id="PS01167">
    <property type="entry name" value="RIBOSOMAL_L17"/>
    <property type="match status" value="1"/>
</dbReference>
<accession>C1CPB5</accession>
<proteinExistence type="inferred from homology"/>
<protein>
    <recommendedName>
        <fullName evidence="1">Large ribosomal subunit protein bL17</fullName>
    </recommendedName>
    <alternativeName>
        <fullName evidence="2">50S ribosomal protein L17</fullName>
    </alternativeName>
</protein>
<feature type="chain" id="PRO_1000184050" description="Large ribosomal subunit protein bL17">
    <location>
        <begin position="1"/>
        <end position="128"/>
    </location>
</feature>
<organism>
    <name type="scientific">Streptococcus pneumoniae (strain Taiwan19F-14)</name>
    <dbReference type="NCBI Taxonomy" id="487213"/>
    <lineage>
        <taxon>Bacteria</taxon>
        <taxon>Bacillati</taxon>
        <taxon>Bacillota</taxon>
        <taxon>Bacilli</taxon>
        <taxon>Lactobacillales</taxon>
        <taxon>Streptococcaceae</taxon>
        <taxon>Streptococcus</taxon>
    </lineage>
</organism>